<sequence length="98" mass="10778">MARSIKKGPFADKHLTKKVEDANKGNKKSVIKTWSRRSTILPDFVGHTFAVHNGRKFVPVFVTENMVGHKLGEFAPTRTFHGHSAEKKAAAAPGPAKK</sequence>
<accession>Q2IJ80</accession>
<proteinExistence type="inferred from homology"/>
<organism>
    <name type="scientific">Anaeromyxobacter dehalogenans (strain 2CP-C)</name>
    <dbReference type="NCBI Taxonomy" id="290397"/>
    <lineage>
        <taxon>Bacteria</taxon>
        <taxon>Pseudomonadati</taxon>
        <taxon>Myxococcota</taxon>
        <taxon>Myxococcia</taxon>
        <taxon>Myxococcales</taxon>
        <taxon>Cystobacterineae</taxon>
        <taxon>Anaeromyxobacteraceae</taxon>
        <taxon>Anaeromyxobacter</taxon>
    </lineage>
</organism>
<name>RS19_ANADE</name>
<reference key="1">
    <citation type="submission" date="2006-01" db="EMBL/GenBank/DDBJ databases">
        <title>Complete sequence of Anaeromyxobacter dehalogenans 2CP-C.</title>
        <authorList>
            <person name="Copeland A."/>
            <person name="Lucas S."/>
            <person name="Lapidus A."/>
            <person name="Barry K."/>
            <person name="Detter J.C."/>
            <person name="Glavina T."/>
            <person name="Hammon N."/>
            <person name="Israni S."/>
            <person name="Pitluck S."/>
            <person name="Brettin T."/>
            <person name="Bruce D."/>
            <person name="Han C."/>
            <person name="Tapia R."/>
            <person name="Gilna P."/>
            <person name="Kiss H."/>
            <person name="Schmutz J."/>
            <person name="Larimer F."/>
            <person name="Land M."/>
            <person name="Kyrpides N."/>
            <person name="Anderson I."/>
            <person name="Sanford R.A."/>
            <person name="Ritalahti K.M."/>
            <person name="Thomas H.S."/>
            <person name="Kirby J.R."/>
            <person name="Zhulin I.B."/>
            <person name="Loeffler F.E."/>
            <person name="Richardson P."/>
        </authorList>
    </citation>
    <scope>NUCLEOTIDE SEQUENCE [LARGE SCALE GENOMIC DNA]</scope>
    <source>
        <strain>2CP-C</strain>
    </source>
</reference>
<gene>
    <name evidence="1" type="primary">rpsS</name>
    <name type="ordered locus">Adeh_1942</name>
</gene>
<evidence type="ECO:0000255" key="1">
    <source>
        <dbReference type="HAMAP-Rule" id="MF_00531"/>
    </source>
</evidence>
<evidence type="ECO:0000256" key="2">
    <source>
        <dbReference type="SAM" id="MobiDB-lite"/>
    </source>
</evidence>
<evidence type="ECO:0000305" key="3"/>
<feature type="chain" id="PRO_0000265324" description="Small ribosomal subunit protein uS19">
    <location>
        <begin position="1"/>
        <end position="98"/>
    </location>
</feature>
<feature type="region of interest" description="Disordered" evidence="2">
    <location>
        <begin position="1"/>
        <end position="30"/>
    </location>
</feature>
<feature type="region of interest" description="Disordered" evidence="2">
    <location>
        <begin position="78"/>
        <end position="98"/>
    </location>
</feature>
<feature type="compositionally biased region" description="Basic and acidic residues" evidence="2">
    <location>
        <begin position="9"/>
        <end position="24"/>
    </location>
</feature>
<comment type="function">
    <text evidence="1">Protein S19 forms a complex with S13 that binds strongly to the 16S ribosomal RNA.</text>
</comment>
<comment type="similarity">
    <text evidence="1">Belongs to the universal ribosomal protein uS19 family.</text>
</comment>
<dbReference type="EMBL" id="CP000251">
    <property type="protein sequence ID" value="ABC81713.1"/>
    <property type="molecule type" value="Genomic_DNA"/>
</dbReference>
<dbReference type="RefSeq" id="WP_011420996.1">
    <property type="nucleotide sequence ID" value="NC_007760.1"/>
</dbReference>
<dbReference type="SMR" id="Q2IJ80"/>
<dbReference type="STRING" id="290397.Adeh_1942"/>
<dbReference type="KEGG" id="ade:Adeh_1942"/>
<dbReference type="eggNOG" id="COG0185">
    <property type="taxonomic scope" value="Bacteria"/>
</dbReference>
<dbReference type="HOGENOM" id="CLU_144911_0_1_7"/>
<dbReference type="OrthoDB" id="9797833at2"/>
<dbReference type="Proteomes" id="UP000001935">
    <property type="component" value="Chromosome"/>
</dbReference>
<dbReference type="GO" id="GO:0005737">
    <property type="term" value="C:cytoplasm"/>
    <property type="evidence" value="ECO:0007669"/>
    <property type="project" value="UniProtKB-ARBA"/>
</dbReference>
<dbReference type="GO" id="GO:0015935">
    <property type="term" value="C:small ribosomal subunit"/>
    <property type="evidence" value="ECO:0007669"/>
    <property type="project" value="InterPro"/>
</dbReference>
<dbReference type="GO" id="GO:0019843">
    <property type="term" value="F:rRNA binding"/>
    <property type="evidence" value="ECO:0007669"/>
    <property type="project" value="UniProtKB-UniRule"/>
</dbReference>
<dbReference type="GO" id="GO:0003735">
    <property type="term" value="F:structural constituent of ribosome"/>
    <property type="evidence" value="ECO:0007669"/>
    <property type="project" value="InterPro"/>
</dbReference>
<dbReference type="GO" id="GO:0000028">
    <property type="term" value="P:ribosomal small subunit assembly"/>
    <property type="evidence" value="ECO:0007669"/>
    <property type="project" value="TreeGrafter"/>
</dbReference>
<dbReference type="GO" id="GO:0006412">
    <property type="term" value="P:translation"/>
    <property type="evidence" value="ECO:0007669"/>
    <property type="project" value="UniProtKB-UniRule"/>
</dbReference>
<dbReference type="FunFam" id="3.30.860.10:FF:000001">
    <property type="entry name" value="30S ribosomal protein S19"/>
    <property type="match status" value="1"/>
</dbReference>
<dbReference type="Gene3D" id="3.30.860.10">
    <property type="entry name" value="30s Ribosomal Protein S19, Chain A"/>
    <property type="match status" value="1"/>
</dbReference>
<dbReference type="HAMAP" id="MF_00531">
    <property type="entry name" value="Ribosomal_uS19"/>
    <property type="match status" value="1"/>
</dbReference>
<dbReference type="InterPro" id="IPR002222">
    <property type="entry name" value="Ribosomal_uS19"/>
</dbReference>
<dbReference type="InterPro" id="IPR005732">
    <property type="entry name" value="Ribosomal_uS19_bac-type"/>
</dbReference>
<dbReference type="InterPro" id="IPR020934">
    <property type="entry name" value="Ribosomal_uS19_CS"/>
</dbReference>
<dbReference type="InterPro" id="IPR023575">
    <property type="entry name" value="Ribosomal_uS19_SF"/>
</dbReference>
<dbReference type="NCBIfam" id="TIGR01050">
    <property type="entry name" value="rpsS_bact"/>
    <property type="match status" value="1"/>
</dbReference>
<dbReference type="PANTHER" id="PTHR11880">
    <property type="entry name" value="RIBOSOMAL PROTEIN S19P FAMILY MEMBER"/>
    <property type="match status" value="1"/>
</dbReference>
<dbReference type="PANTHER" id="PTHR11880:SF8">
    <property type="entry name" value="SMALL RIBOSOMAL SUBUNIT PROTEIN US19M"/>
    <property type="match status" value="1"/>
</dbReference>
<dbReference type="Pfam" id="PF00203">
    <property type="entry name" value="Ribosomal_S19"/>
    <property type="match status" value="1"/>
</dbReference>
<dbReference type="PIRSF" id="PIRSF002144">
    <property type="entry name" value="Ribosomal_S19"/>
    <property type="match status" value="1"/>
</dbReference>
<dbReference type="PRINTS" id="PR00975">
    <property type="entry name" value="RIBOSOMALS19"/>
</dbReference>
<dbReference type="SUPFAM" id="SSF54570">
    <property type="entry name" value="Ribosomal protein S19"/>
    <property type="match status" value="1"/>
</dbReference>
<dbReference type="PROSITE" id="PS00323">
    <property type="entry name" value="RIBOSOMAL_S19"/>
    <property type="match status" value="1"/>
</dbReference>
<keyword id="KW-1185">Reference proteome</keyword>
<keyword id="KW-0687">Ribonucleoprotein</keyword>
<keyword id="KW-0689">Ribosomal protein</keyword>
<keyword id="KW-0694">RNA-binding</keyword>
<keyword id="KW-0699">rRNA-binding</keyword>
<protein>
    <recommendedName>
        <fullName evidence="1">Small ribosomal subunit protein uS19</fullName>
    </recommendedName>
    <alternativeName>
        <fullName evidence="3">30S ribosomal protein S19</fullName>
    </alternativeName>
</protein>